<accession>Q06528</accession>
<reference key="1">
    <citation type="journal article" date="1993" name="J. Bacteriol.">
        <title>Cloning and sequencing of a gene encoding carminomycin 4-O-methyltransferase from Streptomyces peucetius and its expression in Escherichia coli.</title>
        <authorList>
            <person name="Madduri K."/>
            <person name="Torti F."/>
            <person name="Colombo A.L."/>
            <person name="Hutchinson C.R."/>
        </authorList>
    </citation>
    <scope>NUCLEOTIDE SEQUENCE [GENOMIC DNA]</scope>
    <scope>PROTEIN SEQUENCE OF 2-18</scope>
    <source>
        <strain>ATCC 29050 / DSM 40754 / JCM 9920 / NBRC 100596 / NCIMB 10972</strain>
    </source>
</reference>
<reference key="2">
    <citation type="journal article" date="1995" name="J. Bacteriol.">
        <title>Functional characterization and transcriptional analysis of a gene cluster governing early and late steps in daunorubicin biosynthesis in Streptomyces peucetius.</title>
        <authorList>
            <person name="Madduri K."/>
            <person name="Hutchinson C.R."/>
        </authorList>
    </citation>
    <scope>NUCLEOTIDE SEQUENCE [GENOMIC DNA]</scope>
    <source>
        <strain>ATCC 29050 / DSM 40754 / JCM 9920 / NBRC 100596 / NCIMB 10972</strain>
    </source>
</reference>
<reference key="3">
    <citation type="journal article" date="2004" name="J. Biol. Chem.">
        <title>Crystal structure of a ternary complex of DnrK, a methyltransferase in daunorubicin biosynthesis, with bound products.</title>
        <authorList>
            <person name="Jansson A."/>
            <person name="Koskiniemi H."/>
            <person name="Mantsala P."/>
            <person name="Niemi J."/>
            <person name="Schneider G."/>
        </authorList>
    </citation>
    <scope>X-RAY CRYSTALLOGRAPHY (2.5 ANGSTROMS) OF 2-355 IN COMPLEX WITH S-ADENOSYL-L-HOMOCYSTEINE AND ANTHRACYCLINE ANALOG</scope>
    <scope>FUNCTION</scope>
    <scope>CATALYTIC ACTIVITY</scope>
    <scope>SUBSTRATE SPECIFICITY</scope>
    <scope>SUBUNIT</scope>
</reference>
<keyword id="KW-0002">3D-structure</keyword>
<keyword id="KW-0045">Antibiotic biosynthesis</keyword>
<keyword id="KW-0903">Direct protein sequencing</keyword>
<keyword id="KW-0489">Methyltransferase</keyword>
<keyword id="KW-0949">S-adenosyl-L-methionine</keyword>
<keyword id="KW-0808">Transferase</keyword>
<comment type="function">
    <text evidence="2">Involved in the biosynthesis of the anthracyclines carminomycin and daunorubicin (daunomycin) which are aromatic polyketide antibiotics that exhibit high cytotoxicity and are widely applied in the chemotherapy of a variety of cancers. In vivo, catalyzes the transfer of a methyl group from S-adenosyl-L-methionine to the 4-O-position of carminomycin to form daunorubicin. In vitro, it also methylates the anthracyclines rhodomycin D (10-carbomethoxy-13-deoxycarminomycin) and 13-deoxy-carminomycin at the 4-hydroxyl position. It is quite specific with respect to the length of the carbohydrate chain at the C7 position, but it can accept substrates with bulky substituent at C10 position.</text>
</comment>
<comment type="catalytic activity">
    <reaction evidence="2">
        <text>carminomycin + S-adenosyl-L-methionine = daunorubicin + S-adenosyl-L-homocysteine + H(+)</text>
        <dbReference type="Rhea" id="RHEA:38311"/>
        <dbReference type="ChEBI" id="CHEBI:15378"/>
        <dbReference type="ChEBI" id="CHEBI:57856"/>
        <dbReference type="ChEBI" id="CHEBI:59789"/>
        <dbReference type="ChEBI" id="CHEBI:64677"/>
        <dbReference type="ChEBI" id="CHEBI:75730"/>
        <dbReference type="EC" id="2.1.1.292"/>
    </reaction>
</comment>
<comment type="pathway">
    <text>Antibiotic biosynthesis; daunorubicin biosynthesis.</text>
</comment>
<comment type="pathway">
    <text>Antibiotic biosynthesis; carminomycin biosynthesis.</text>
</comment>
<comment type="subunit">
    <text evidence="2">Homodimer and homotetramer in equilibrium.</text>
</comment>
<comment type="similarity">
    <text evidence="1">Belongs to the class I-like SAM-binding methyltransferase superfamily. Cation-independent O-methyltransferase family.</text>
</comment>
<feature type="initiator methionine" description="Removed" evidence="3">
    <location>
        <position position="1"/>
    </location>
</feature>
<feature type="chain" id="PRO_0000089881" description="Carminomycin 4-O-methyltransferase DnrK">
    <location>
        <begin position="2"/>
        <end position="356"/>
    </location>
</feature>
<feature type="binding site">
    <location>
        <position position="153"/>
    </location>
    <ligand>
        <name>S-adenosyl-L-methionine</name>
        <dbReference type="ChEBI" id="CHEBI:59789"/>
    </ligand>
</feature>
<feature type="binding site">
    <location>
        <position position="163"/>
    </location>
    <ligand>
        <name>substrate</name>
    </ligand>
</feature>
<feature type="binding site">
    <location>
        <position position="187"/>
    </location>
    <ligand>
        <name>S-adenosyl-L-methionine</name>
        <dbReference type="ChEBI" id="CHEBI:59789"/>
    </ligand>
</feature>
<feature type="binding site">
    <location>
        <position position="210"/>
    </location>
    <ligand>
        <name>S-adenosyl-L-methionine</name>
        <dbReference type="ChEBI" id="CHEBI:59789"/>
    </ligand>
</feature>
<feature type="binding site">
    <location>
        <begin position="237"/>
        <end position="238"/>
    </location>
    <ligand>
        <name>S-adenosyl-L-methionine</name>
        <dbReference type="ChEBI" id="CHEBI:59789"/>
    </ligand>
</feature>
<feature type="binding site">
    <location>
        <position position="252"/>
    </location>
    <ligand>
        <name>S-adenosyl-L-methionine</name>
        <dbReference type="ChEBI" id="CHEBI:59789"/>
    </ligand>
</feature>
<feature type="binding site">
    <location>
        <position position="257"/>
    </location>
    <ligand>
        <name>substrate</name>
    </ligand>
</feature>
<feature type="binding site">
    <location>
        <position position="303"/>
    </location>
    <ligand>
        <name>substrate</name>
    </ligand>
</feature>
<feature type="helix" evidence="5">
    <location>
        <begin position="18"/>
        <end position="24"/>
    </location>
</feature>
<feature type="helix" evidence="5">
    <location>
        <begin position="27"/>
        <end position="37"/>
    </location>
</feature>
<feature type="helix" evidence="5">
    <location>
        <begin position="40"/>
        <end position="45"/>
    </location>
</feature>
<feature type="helix" evidence="5">
    <location>
        <begin position="51"/>
        <end position="58"/>
    </location>
</feature>
<feature type="helix" evidence="5">
    <location>
        <begin position="62"/>
        <end position="74"/>
    </location>
</feature>
<feature type="strand" evidence="5">
    <location>
        <begin position="77"/>
        <end position="79"/>
    </location>
</feature>
<feature type="strand" evidence="4">
    <location>
        <begin position="85"/>
        <end position="88"/>
    </location>
</feature>
<feature type="helix" evidence="5">
    <location>
        <begin position="92"/>
        <end position="95"/>
    </location>
</feature>
<feature type="helix" evidence="5">
    <location>
        <begin position="103"/>
        <end position="106"/>
    </location>
</feature>
<feature type="helix" evidence="5">
    <location>
        <begin position="112"/>
        <end position="117"/>
    </location>
</feature>
<feature type="helix" evidence="5">
    <location>
        <begin position="118"/>
        <end position="122"/>
    </location>
</feature>
<feature type="helix" evidence="5">
    <location>
        <begin position="123"/>
        <end position="129"/>
    </location>
</feature>
<feature type="helix" evidence="5">
    <location>
        <begin position="134"/>
        <end position="138"/>
    </location>
</feature>
<feature type="helix" evidence="5">
    <location>
        <begin position="142"/>
        <end position="148"/>
    </location>
</feature>
<feature type="helix" evidence="5">
    <location>
        <begin position="150"/>
        <end position="160"/>
    </location>
</feature>
<feature type="turn" evidence="5">
    <location>
        <begin position="161"/>
        <end position="168"/>
    </location>
</feature>
<feature type="helix" evidence="5">
    <location>
        <begin position="169"/>
        <end position="173"/>
    </location>
</feature>
<feature type="strand" evidence="5">
    <location>
        <begin position="182"/>
        <end position="186"/>
    </location>
</feature>
<feature type="helix" evidence="5">
    <location>
        <begin position="192"/>
        <end position="200"/>
    </location>
</feature>
<feature type="strand" evidence="5">
    <location>
        <begin position="205"/>
        <end position="210"/>
    </location>
</feature>
<feature type="helix" evidence="5">
    <location>
        <begin position="214"/>
        <end position="224"/>
    </location>
</feature>
<feature type="turn" evidence="5">
    <location>
        <begin position="228"/>
        <end position="230"/>
    </location>
</feature>
<feature type="strand" evidence="5">
    <location>
        <begin position="231"/>
        <end position="235"/>
    </location>
</feature>
<feature type="strand" evidence="5">
    <location>
        <begin position="246"/>
        <end position="253"/>
    </location>
</feature>
<feature type="helix" evidence="5">
    <location>
        <begin position="255"/>
        <end position="257"/>
    </location>
</feature>
<feature type="helix" evidence="5">
    <location>
        <begin position="260"/>
        <end position="272"/>
    </location>
</feature>
<feature type="strand" evidence="5">
    <location>
        <begin position="274"/>
        <end position="284"/>
    </location>
</feature>
<feature type="helix" evidence="4">
    <location>
        <begin position="289"/>
        <end position="291"/>
    </location>
</feature>
<feature type="helix" evidence="5">
    <location>
        <begin position="302"/>
        <end position="308"/>
    </location>
</feature>
<feature type="helix" evidence="5">
    <location>
        <begin position="315"/>
        <end position="324"/>
    </location>
</feature>
<feature type="strand" evidence="5">
    <location>
        <begin position="327"/>
        <end position="334"/>
    </location>
</feature>
<feature type="strand" evidence="4">
    <location>
        <begin position="338"/>
        <end position="340"/>
    </location>
</feature>
<feature type="strand" evidence="5">
    <location>
        <begin position="345"/>
        <end position="351"/>
    </location>
</feature>
<protein>
    <recommendedName>
        <fullName>Carminomycin 4-O-methyltransferase DnrK</fullName>
        <shortName>COMT</shortName>
        <ecNumber>2.1.1.292</ecNumber>
    </recommendedName>
    <alternativeName>
        <fullName>Anthracycline 4-O-methyltransferase</fullName>
    </alternativeName>
</protein>
<gene>
    <name type="primary">dnrK</name>
</gene>
<sequence length="356" mass="38782">MTAEPTVAARPQQIDALRTLIRLGSLHTPMVVRTAATLRLVDHILAGARTVKALAARTDTRPEALLRLIRHLVAIGLLEEDAPGEFVPTEVGELLADDHPAAQRAWHDLTQAVARADISFTRLPDAIRTGRPTYESIYGKPFYEDLAGRPDLRASFDSLLACDQDVAFDAPAAAYDWTNVRHVLDVGGGKGGFAAAIARRAPHVSATVLEMAGTVDTARSYLKDEGLSDRVDVVEGDFFEPLPRKADAIILSFVLLNWPDHDAVRILTRCAEALEPGGRILIHERDDLHENSFNEQFTELDLRMLVFLGGALRTREKWDGLAASAGLVVEEVRQLPSPTIPYDLSLLVLAPAATGA</sequence>
<dbReference type="EC" id="2.1.1.292"/>
<dbReference type="EMBL" id="L13453">
    <property type="protein sequence ID" value="AAA26712.1"/>
    <property type="molecule type" value="Genomic_DNA"/>
</dbReference>
<dbReference type="EMBL" id="L40425">
    <property type="protein sequence ID" value="AAA99001.1"/>
    <property type="molecule type" value="Genomic_DNA"/>
</dbReference>
<dbReference type="PIR" id="A47128">
    <property type="entry name" value="A47128"/>
</dbReference>
<dbReference type="PDB" id="1TW2">
    <property type="method" value="X-ray"/>
    <property type="resolution" value="2.50 A"/>
    <property type="chains" value="A/B=2-356"/>
</dbReference>
<dbReference type="PDB" id="1TW3">
    <property type="method" value="X-ray"/>
    <property type="resolution" value="2.35 A"/>
    <property type="chains" value="A/B=2-356"/>
</dbReference>
<dbReference type="PDB" id="4WXH">
    <property type="method" value="X-ray"/>
    <property type="resolution" value="1.90 A"/>
    <property type="chains" value="A/B=2-356"/>
</dbReference>
<dbReference type="PDB" id="5EEG">
    <property type="method" value="X-ray"/>
    <property type="resolution" value="2.25 A"/>
    <property type="chains" value="A/B=1-356"/>
</dbReference>
<dbReference type="PDB" id="5EEH">
    <property type="method" value="X-ray"/>
    <property type="resolution" value="1.82 A"/>
    <property type="chains" value="A/B/C=1-356"/>
</dbReference>
<dbReference type="PDB" id="5JR3">
    <property type="method" value="X-ray"/>
    <property type="resolution" value="1.84 A"/>
    <property type="chains" value="A/B/C=10-353"/>
</dbReference>
<dbReference type="PDB" id="7OWB">
    <property type="method" value="X-ray"/>
    <property type="resolution" value="2.45 A"/>
    <property type="chains" value="A=2-285, A=302-356"/>
</dbReference>
<dbReference type="PDB" id="7PGA">
    <property type="method" value="X-ray"/>
    <property type="resolution" value="2.77 A"/>
    <property type="chains" value="A/B/C/D=2-159, A/B/C/D=173-285, A/B/C/D=306-333, A/B/C/D=348-356"/>
</dbReference>
<dbReference type="PDB" id="7PGJ">
    <property type="method" value="X-ray"/>
    <property type="resolution" value="2.13 A"/>
    <property type="chains" value="A=2-159, A=173-285, A=306-333, A=348-356"/>
</dbReference>
<dbReference type="PDB" id="7PHD">
    <property type="method" value="X-ray"/>
    <property type="resolution" value="1.53 A"/>
    <property type="chains" value="A/B=2-285, A/B=302-356"/>
</dbReference>
<dbReference type="PDBsum" id="1TW2"/>
<dbReference type="PDBsum" id="1TW3"/>
<dbReference type="PDBsum" id="4WXH"/>
<dbReference type="PDBsum" id="5EEG"/>
<dbReference type="PDBsum" id="5EEH"/>
<dbReference type="PDBsum" id="5JR3"/>
<dbReference type="PDBsum" id="7OWB"/>
<dbReference type="PDBsum" id="7PGA"/>
<dbReference type="PDBsum" id="7PGJ"/>
<dbReference type="PDBsum" id="7PHD"/>
<dbReference type="SMR" id="Q06528"/>
<dbReference type="ChEMBL" id="CHEMBL5465378"/>
<dbReference type="DrugBank" id="DB03199">
    <property type="generic name" value="4-Methoxy-E-Rhodomycin T"/>
</dbReference>
<dbReference type="DrugBank" id="DB01752">
    <property type="generic name" value="S-adenosyl-L-homocysteine"/>
</dbReference>
<dbReference type="KEGG" id="ag:AAA26712"/>
<dbReference type="BioCyc" id="MetaCyc:MONOMER-18173"/>
<dbReference type="BRENDA" id="2.1.1.292">
    <property type="organism ID" value="6073"/>
</dbReference>
<dbReference type="UniPathway" id="UPA00054"/>
<dbReference type="UniPathway" id="UPA01040"/>
<dbReference type="EvolutionaryTrace" id="Q06528"/>
<dbReference type="GO" id="GO:0008168">
    <property type="term" value="F:methyltransferase activity"/>
    <property type="evidence" value="ECO:0000314"/>
    <property type="project" value="UniProtKB"/>
</dbReference>
<dbReference type="GO" id="GO:0008171">
    <property type="term" value="F:O-methyltransferase activity"/>
    <property type="evidence" value="ECO:0007669"/>
    <property type="project" value="InterPro"/>
</dbReference>
<dbReference type="GO" id="GO:0046983">
    <property type="term" value="F:protein dimerization activity"/>
    <property type="evidence" value="ECO:0007669"/>
    <property type="project" value="InterPro"/>
</dbReference>
<dbReference type="GO" id="GO:1901771">
    <property type="term" value="P:daunorubicin biosynthetic process"/>
    <property type="evidence" value="ECO:0000314"/>
    <property type="project" value="UniProtKB"/>
</dbReference>
<dbReference type="GO" id="GO:0032259">
    <property type="term" value="P:methylation"/>
    <property type="evidence" value="ECO:0007669"/>
    <property type="project" value="UniProtKB-KW"/>
</dbReference>
<dbReference type="CDD" id="cd02440">
    <property type="entry name" value="AdoMet_MTases"/>
    <property type="match status" value="1"/>
</dbReference>
<dbReference type="FunFam" id="1.10.10.10:FF:001051">
    <property type="entry name" value="Carminomycin 4-O-methyltransferase DnrK"/>
    <property type="match status" value="1"/>
</dbReference>
<dbReference type="FunFam" id="3.40.50.150:FF:000405">
    <property type="entry name" value="Carminomycin 4-O-methyltransferase DnrK"/>
    <property type="match status" value="1"/>
</dbReference>
<dbReference type="Gene3D" id="1.10.287.1350">
    <property type="match status" value="1"/>
</dbReference>
<dbReference type="Gene3D" id="3.40.50.150">
    <property type="entry name" value="Vaccinia Virus protein VP39"/>
    <property type="match status" value="1"/>
</dbReference>
<dbReference type="Gene3D" id="1.10.10.10">
    <property type="entry name" value="Winged helix-like DNA-binding domain superfamily/Winged helix DNA-binding domain"/>
    <property type="match status" value="1"/>
</dbReference>
<dbReference type="InterPro" id="IPR016461">
    <property type="entry name" value="COMT-like"/>
</dbReference>
<dbReference type="InterPro" id="IPR001077">
    <property type="entry name" value="O_MeTrfase_dom"/>
</dbReference>
<dbReference type="InterPro" id="IPR012967">
    <property type="entry name" value="Plant_O-MeTrfase_dimerisation"/>
</dbReference>
<dbReference type="InterPro" id="IPR029063">
    <property type="entry name" value="SAM-dependent_MTases_sf"/>
</dbReference>
<dbReference type="InterPro" id="IPR036388">
    <property type="entry name" value="WH-like_DNA-bd_sf"/>
</dbReference>
<dbReference type="InterPro" id="IPR036390">
    <property type="entry name" value="WH_DNA-bd_sf"/>
</dbReference>
<dbReference type="PANTHER" id="PTHR43712:SF2">
    <property type="entry name" value="O-METHYLTRANSFERASE CICE"/>
    <property type="match status" value="1"/>
</dbReference>
<dbReference type="PANTHER" id="PTHR43712">
    <property type="entry name" value="PUTATIVE (AFU_ORTHOLOGUE AFUA_4G14580)-RELATED"/>
    <property type="match status" value="1"/>
</dbReference>
<dbReference type="Pfam" id="PF08100">
    <property type="entry name" value="Dimerisation"/>
    <property type="match status" value="1"/>
</dbReference>
<dbReference type="Pfam" id="PF00891">
    <property type="entry name" value="Methyltransf_2"/>
    <property type="match status" value="1"/>
</dbReference>
<dbReference type="PIRSF" id="PIRSF005739">
    <property type="entry name" value="O-mtase"/>
    <property type="match status" value="1"/>
</dbReference>
<dbReference type="SUPFAM" id="SSF53335">
    <property type="entry name" value="S-adenosyl-L-methionine-dependent methyltransferases"/>
    <property type="match status" value="1"/>
</dbReference>
<dbReference type="SUPFAM" id="SSF46785">
    <property type="entry name" value="Winged helix' DNA-binding domain"/>
    <property type="match status" value="1"/>
</dbReference>
<dbReference type="PROSITE" id="PS51683">
    <property type="entry name" value="SAM_OMT_II"/>
    <property type="match status" value="1"/>
</dbReference>
<proteinExistence type="evidence at protein level"/>
<evidence type="ECO:0000255" key="1">
    <source>
        <dbReference type="PROSITE-ProRule" id="PRU01020"/>
    </source>
</evidence>
<evidence type="ECO:0000269" key="2">
    <source>
    </source>
</evidence>
<evidence type="ECO:0000269" key="3">
    <source>
    </source>
</evidence>
<evidence type="ECO:0007829" key="4">
    <source>
        <dbReference type="PDB" id="5EEH"/>
    </source>
</evidence>
<evidence type="ECO:0007829" key="5">
    <source>
        <dbReference type="PDB" id="7PHD"/>
    </source>
</evidence>
<name>DNRK_STRPE</name>
<organism>
    <name type="scientific">Streptomyces peucetius</name>
    <dbReference type="NCBI Taxonomy" id="1950"/>
    <lineage>
        <taxon>Bacteria</taxon>
        <taxon>Bacillati</taxon>
        <taxon>Actinomycetota</taxon>
        <taxon>Actinomycetes</taxon>
        <taxon>Kitasatosporales</taxon>
        <taxon>Streptomycetaceae</taxon>
        <taxon>Streptomyces</taxon>
    </lineage>
</organism>